<protein>
    <recommendedName>
        <fullName evidence="1">Large ribosomal subunit protein uL14</fullName>
    </recommendedName>
    <alternativeName>
        <fullName evidence="2">50S ribosomal protein L14</fullName>
    </alternativeName>
</protein>
<gene>
    <name evidence="1" type="primary">rplN</name>
    <name type="ordered locus">COSY_0179</name>
</gene>
<organism>
    <name type="scientific">Vesicomyosocius okutanii subsp. Calyptogena okutanii (strain HA)</name>
    <dbReference type="NCBI Taxonomy" id="412965"/>
    <lineage>
        <taxon>Bacteria</taxon>
        <taxon>Pseudomonadati</taxon>
        <taxon>Pseudomonadota</taxon>
        <taxon>Gammaproteobacteria</taxon>
        <taxon>Candidatus Pseudothioglobaceae</taxon>
        <taxon>Candidatus Vesicomyosocius</taxon>
    </lineage>
</organism>
<comment type="function">
    <text evidence="1">Binds to 23S rRNA. Forms part of two intersubunit bridges in the 70S ribosome.</text>
</comment>
<comment type="subunit">
    <text evidence="1">Part of the 50S ribosomal subunit. Forms a cluster with proteins L3 and L19. In the 70S ribosome, L14 and L19 interact and together make contacts with the 16S rRNA in bridges B5 and B8.</text>
</comment>
<comment type="similarity">
    <text evidence="1">Belongs to the universal ribosomal protein uL14 family.</text>
</comment>
<feature type="chain" id="PRO_1000055750" description="Large ribosomal subunit protein uL14">
    <location>
        <begin position="1"/>
        <end position="122"/>
    </location>
</feature>
<proteinExistence type="inferred from homology"/>
<accession>A5CXL4</accession>
<evidence type="ECO:0000255" key="1">
    <source>
        <dbReference type="HAMAP-Rule" id="MF_01367"/>
    </source>
</evidence>
<evidence type="ECO:0000305" key="2"/>
<reference key="1">
    <citation type="journal article" date="2007" name="Curr. Biol.">
        <title>Reduced genome of the thioautotrophic intracellular symbiont in a deep-sea clam, Calyptogena okutanii.</title>
        <authorList>
            <person name="Kuwahara H."/>
            <person name="Yoshida T."/>
            <person name="Takaki Y."/>
            <person name="Shimamura S."/>
            <person name="Nishi S."/>
            <person name="Harada M."/>
            <person name="Matsuyama K."/>
            <person name="Takishita K."/>
            <person name="Kawato M."/>
            <person name="Uematsu K."/>
            <person name="Fujiwara Y."/>
            <person name="Sato T."/>
            <person name="Kato C."/>
            <person name="Kitagawa M."/>
            <person name="Kato I."/>
            <person name="Maruyama T."/>
        </authorList>
    </citation>
    <scope>NUCLEOTIDE SEQUENCE [LARGE SCALE GENOMIC DNA]</scope>
    <source>
        <strain>HA</strain>
    </source>
</reference>
<sequence length="122" mass="13417">MIQVQTRLKVADNSGGIKAMCIKVLGGSKRRYANIGDVIKVSIKEVVPRGKVKKGDVYDAVVVRTAHGVRRSDGSRIRFDSNAIVLLNTKREPIGTRIFGPVTRELRSAQFMKIVSLAPEVL</sequence>
<keyword id="KW-1185">Reference proteome</keyword>
<keyword id="KW-0687">Ribonucleoprotein</keyword>
<keyword id="KW-0689">Ribosomal protein</keyword>
<keyword id="KW-0694">RNA-binding</keyword>
<keyword id="KW-0699">rRNA-binding</keyword>
<name>RL14_VESOH</name>
<dbReference type="EMBL" id="AP009247">
    <property type="protein sequence ID" value="BAF61309.1"/>
    <property type="molecule type" value="Genomic_DNA"/>
</dbReference>
<dbReference type="RefSeq" id="WP_011929579.1">
    <property type="nucleotide sequence ID" value="NC_009465.1"/>
</dbReference>
<dbReference type="SMR" id="A5CXL4"/>
<dbReference type="STRING" id="412965.COSY_0179"/>
<dbReference type="KEGG" id="vok:COSY_0179"/>
<dbReference type="eggNOG" id="COG0093">
    <property type="taxonomic scope" value="Bacteria"/>
</dbReference>
<dbReference type="HOGENOM" id="CLU_095071_2_1_6"/>
<dbReference type="OrthoDB" id="9806379at2"/>
<dbReference type="Proteomes" id="UP000000247">
    <property type="component" value="Chromosome"/>
</dbReference>
<dbReference type="GO" id="GO:0022625">
    <property type="term" value="C:cytosolic large ribosomal subunit"/>
    <property type="evidence" value="ECO:0007669"/>
    <property type="project" value="TreeGrafter"/>
</dbReference>
<dbReference type="GO" id="GO:0070180">
    <property type="term" value="F:large ribosomal subunit rRNA binding"/>
    <property type="evidence" value="ECO:0007669"/>
    <property type="project" value="TreeGrafter"/>
</dbReference>
<dbReference type="GO" id="GO:0003735">
    <property type="term" value="F:structural constituent of ribosome"/>
    <property type="evidence" value="ECO:0007669"/>
    <property type="project" value="InterPro"/>
</dbReference>
<dbReference type="GO" id="GO:0006412">
    <property type="term" value="P:translation"/>
    <property type="evidence" value="ECO:0007669"/>
    <property type="project" value="UniProtKB-UniRule"/>
</dbReference>
<dbReference type="CDD" id="cd00337">
    <property type="entry name" value="Ribosomal_uL14"/>
    <property type="match status" value="1"/>
</dbReference>
<dbReference type="FunFam" id="2.40.150.20:FF:000001">
    <property type="entry name" value="50S ribosomal protein L14"/>
    <property type="match status" value="1"/>
</dbReference>
<dbReference type="Gene3D" id="2.40.150.20">
    <property type="entry name" value="Ribosomal protein L14"/>
    <property type="match status" value="1"/>
</dbReference>
<dbReference type="HAMAP" id="MF_01367">
    <property type="entry name" value="Ribosomal_uL14"/>
    <property type="match status" value="1"/>
</dbReference>
<dbReference type="InterPro" id="IPR000218">
    <property type="entry name" value="Ribosomal_uL14"/>
</dbReference>
<dbReference type="InterPro" id="IPR005745">
    <property type="entry name" value="Ribosomal_uL14_bac-type"/>
</dbReference>
<dbReference type="InterPro" id="IPR019972">
    <property type="entry name" value="Ribosomal_uL14_CS"/>
</dbReference>
<dbReference type="InterPro" id="IPR036853">
    <property type="entry name" value="Ribosomal_uL14_sf"/>
</dbReference>
<dbReference type="NCBIfam" id="TIGR01067">
    <property type="entry name" value="rplN_bact"/>
    <property type="match status" value="1"/>
</dbReference>
<dbReference type="PANTHER" id="PTHR11761">
    <property type="entry name" value="50S/60S RIBOSOMAL PROTEIN L14/L23"/>
    <property type="match status" value="1"/>
</dbReference>
<dbReference type="PANTHER" id="PTHR11761:SF3">
    <property type="entry name" value="LARGE RIBOSOMAL SUBUNIT PROTEIN UL14M"/>
    <property type="match status" value="1"/>
</dbReference>
<dbReference type="Pfam" id="PF00238">
    <property type="entry name" value="Ribosomal_L14"/>
    <property type="match status" value="1"/>
</dbReference>
<dbReference type="SMART" id="SM01374">
    <property type="entry name" value="Ribosomal_L14"/>
    <property type="match status" value="1"/>
</dbReference>
<dbReference type="SUPFAM" id="SSF50193">
    <property type="entry name" value="Ribosomal protein L14"/>
    <property type="match status" value="1"/>
</dbReference>
<dbReference type="PROSITE" id="PS00049">
    <property type="entry name" value="RIBOSOMAL_L14"/>
    <property type="match status" value="1"/>
</dbReference>